<reference key="1">
    <citation type="journal article" date="2004" name="Proc. Natl. Acad. Sci. U.S.A.">
        <title>The diploid genome sequence of Candida albicans.</title>
        <authorList>
            <person name="Jones T."/>
            <person name="Federspiel N.A."/>
            <person name="Chibana H."/>
            <person name="Dungan J."/>
            <person name="Kalman S."/>
            <person name="Magee B.B."/>
            <person name="Newport G."/>
            <person name="Thorstenson Y.R."/>
            <person name="Agabian N."/>
            <person name="Magee P.T."/>
            <person name="Davis R.W."/>
            <person name="Scherer S."/>
        </authorList>
    </citation>
    <scope>NUCLEOTIDE SEQUENCE [LARGE SCALE GENOMIC DNA]</scope>
    <source>
        <strain>SC5314 / ATCC MYA-2876</strain>
    </source>
</reference>
<reference key="2">
    <citation type="journal article" date="2007" name="Genome Biol.">
        <title>Assembly of the Candida albicans genome into sixteen supercontigs aligned on the eight chromosomes.</title>
        <authorList>
            <person name="van het Hoog M."/>
            <person name="Rast T.J."/>
            <person name="Martchenko M."/>
            <person name="Grindle S."/>
            <person name="Dignard D."/>
            <person name="Hogues H."/>
            <person name="Cuomo C."/>
            <person name="Berriman M."/>
            <person name="Scherer S."/>
            <person name="Magee B.B."/>
            <person name="Whiteway M."/>
            <person name="Chibana H."/>
            <person name="Nantel A."/>
            <person name="Magee P.T."/>
        </authorList>
    </citation>
    <scope>GENOME REANNOTATION</scope>
    <source>
        <strain>SC5314 / ATCC MYA-2876</strain>
    </source>
</reference>
<reference key="3">
    <citation type="journal article" date="2013" name="Genome Biol.">
        <title>Assembly of a phased diploid Candida albicans genome facilitates allele-specific measurements and provides a simple model for repeat and indel structure.</title>
        <authorList>
            <person name="Muzzey D."/>
            <person name="Schwartz K."/>
            <person name="Weissman J.S."/>
            <person name="Sherlock G."/>
        </authorList>
    </citation>
    <scope>NUCLEOTIDE SEQUENCE [LARGE SCALE GENOMIC DNA]</scope>
    <scope>GENOME REANNOTATION</scope>
    <source>
        <strain>SC5314 / ATCC MYA-2876</strain>
    </source>
</reference>
<reference evidence="5 6 7" key="4">
    <citation type="journal article" date="2022" name="Sci. Adv.">
        <title>E-site drug specificity of the human pathogen Candida albicans ribosome.</title>
        <authorList>
            <person name="Zgadzay Y."/>
            <person name="Kolosova O."/>
            <person name="Stetsenko A."/>
            <person name="Wu C."/>
            <person name="Bruchlen D."/>
            <person name="Usachev K."/>
            <person name="Validov S."/>
            <person name="Jenner L."/>
            <person name="Rogachev A."/>
            <person name="Yusupova G."/>
            <person name="Sachs M.S."/>
            <person name="Guskov A."/>
            <person name="Yusupov M."/>
        </authorList>
    </citation>
    <scope>STRUCTURE BY ELECTRON MICROSCOPY (2.32 ANGSTROMS) OF THE 80S RIBOSOME</scope>
    <scope>SUBUNIT</scope>
</reference>
<proteinExistence type="evidence at protein level"/>
<keyword id="KW-0002">3D-structure</keyword>
<keyword id="KW-0963">Cytoplasm</keyword>
<keyword id="KW-1185">Reference proteome</keyword>
<keyword id="KW-0687">Ribonucleoprotein</keyword>
<keyword id="KW-0689">Ribosomal protein</keyword>
<protein>
    <recommendedName>
        <fullName evidence="2">Large ribosomal subunit protein eL22</fullName>
    </recommendedName>
    <alternativeName>
        <fullName>60S ribosomal protein L22-B</fullName>
    </alternativeName>
</protein>
<gene>
    <name evidence="2" type="primary">RPL22B</name>
    <name type="ordered locus">orf19.1409.1</name>
    <name type="ORF">CAALFM_C404390WA</name>
</gene>
<evidence type="ECO:0000269" key="1">
    <source>
    </source>
</evidence>
<evidence type="ECO:0000303" key="2">
    <source>
    </source>
</evidence>
<evidence type="ECO:0000305" key="3"/>
<evidence type="ECO:0000305" key="4">
    <source>
    </source>
</evidence>
<evidence type="ECO:0007744" key="5">
    <source>
        <dbReference type="PDB" id="7PZY"/>
    </source>
</evidence>
<evidence type="ECO:0007744" key="6">
    <source>
        <dbReference type="PDB" id="7Q0F"/>
    </source>
</evidence>
<evidence type="ECO:0007744" key="7">
    <source>
        <dbReference type="PDB" id="7Q0P"/>
    </source>
</evidence>
<comment type="function">
    <text evidence="4">Component of the ribosome, a large ribonucleoprotein complex responsible for the synthesis of proteins in the cell. The small ribosomal subunit (SSU) binds messenger RNAs (mRNAs) and translates the encoded message by selecting cognate aminoacyl-transfer RNA (tRNA) molecules. The large subunit (LSU) contains the ribosomal catalytic site termed the peptidyl transferase center (PTC), which catalyzes the formation of peptide bonds, thereby polymerizing the amino acids delivered by tRNAs into a polypeptide chain. The nascent polypeptides leave the ribosome through a tunnel in the LSU and interact with protein factors that function in enzymatic processing, targeting, and the membrane insertion of nascent chains at the exit of the ribosomal tunnel.</text>
</comment>
<comment type="subunit">
    <text evidence="1">Component of the large ribosomal subunit (PubMed:35613268). Mature ribosomes consist of a small (40S) and a large (60S) subunit (PubMed:35613268). The 40S subunit contains about 32 different proteins and 1 molecule of RNA (18S) (PubMed:35613268). The 60S subunit contains 45 different proteins and 3 molecules of RNA (25S, 5.8S and 5S) (PubMed:35613268).</text>
</comment>
<comment type="subcellular location">
    <subcellularLocation>
        <location evidence="4">Cytoplasm</location>
    </subcellularLocation>
</comment>
<comment type="similarity">
    <text evidence="3">Belongs to the eukaryotic ribosomal protein eL22 family.</text>
</comment>
<organism>
    <name type="scientific">Candida albicans (strain SC5314 / ATCC MYA-2876)</name>
    <name type="common">Yeast</name>
    <dbReference type="NCBI Taxonomy" id="237561"/>
    <lineage>
        <taxon>Eukaryota</taxon>
        <taxon>Fungi</taxon>
        <taxon>Dikarya</taxon>
        <taxon>Ascomycota</taxon>
        <taxon>Saccharomycotina</taxon>
        <taxon>Pichiomycetes</taxon>
        <taxon>Debaryomycetaceae</taxon>
        <taxon>Candida/Lodderomyces clade</taxon>
        <taxon>Candida</taxon>
    </lineage>
</organism>
<feature type="chain" id="PRO_0000456514" description="Large ribosomal subunit protein eL22">
    <location>
        <begin position="1"/>
        <end position="124"/>
    </location>
</feature>
<dbReference type="EMBL" id="CP017626">
    <property type="protein sequence ID" value="AOW29188.1"/>
    <property type="molecule type" value="Genomic_DNA"/>
</dbReference>
<dbReference type="RefSeq" id="XP_019330926.1">
    <property type="nucleotide sequence ID" value="XM_019475381.1"/>
</dbReference>
<dbReference type="PDB" id="7PZY">
    <property type="method" value="EM"/>
    <property type="resolution" value="2.32 A"/>
    <property type="chains" value="5=1-124"/>
</dbReference>
<dbReference type="PDB" id="7Q08">
    <property type="method" value="EM"/>
    <property type="resolution" value="2.56 A"/>
    <property type="chains" value="5=1-124"/>
</dbReference>
<dbReference type="PDB" id="7Q0F">
    <property type="method" value="EM"/>
    <property type="resolution" value="2.64 A"/>
    <property type="chains" value="5=1-124"/>
</dbReference>
<dbReference type="PDB" id="7Q0P">
    <property type="method" value="EM"/>
    <property type="resolution" value="2.77 A"/>
    <property type="chains" value="5=1-124"/>
</dbReference>
<dbReference type="PDB" id="7Q0R">
    <property type="method" value="EM"/>
    <property type="resolution" value="2.67 A"/>
    <property type="chains" value="5=1-124"/>
</dbReference>
<dbReference type="PDB" id="8C3A">
    <property type="method" value="X-ray"/>
    <property type="resolution" value="3.00 A"/>
    <property type="chains" value="5/BP=1-124"/>
</dbReference>
<dbReference type="PDB" id="8CQ7">
    <property type="method" value="X-ray"/>
    <property type="resolution" value="3.20 A"/>
    <property type="chains" value="5/BP=1-124"/>
</dbReference>
<dbReference type="PDB" id="8CQW">
    <property type="method" value="X-ray"/>
    <property type="resolution" value="3.05 A"/>
    <property type="chains" value="5/BP=1-124"/>
</dbReference>
<dbReference type="PDB" id="8CRE">
    <property type="method" value="X-ray"/>
    <property type="resolution" value="3.00 A"/>
    <property type="chains" value="5/BP=1-124"/>
</dbReference>
<dbReference type="PDB" id="8OEQ">
    <property type="method" value="X-ray"/>
    <property type="resolution" value="3.30 A"/>
    <property type="chains" value="5/BP=1-124"/>
</dbReference>
<dbReference type="PDB" id="8OGJ">
    <property type="method" value="EM"/>
    <property type="resolution" value="3.10 A"/>
    <property type="chains" value="5=1-124"/>
</dbReference>
<dbReference type="PDB" id="8OH6">
    <property type="method" value="X-ray"/>
    <property type="resolution" value="3.35 A"/>
    <property type="chains" value="5/BP=1-124"/>
</dbReference>
<dbReference type="PDB" id="8OI5">
    <property type="method" value="X-ray"/>
    <property type="resolution" value="2.90 A"/>
    <property type="chains" value="5/BP=1-124"/>
</dbReference>
<dbReference type="PDB" id="8OJ3">
    <property type="method" value="X-ray"/>
    <property type="resolution" value="3.50 A"/>
    <property type="chains" value="5/BP=1-124"/>
</dbReference>
<dbReference type="PDB" id="8Q5I">
    <property type="method" value="EM"/>
    <property type="resolution" value="2.45 A"/>
    <property type="chains" value="5=1-124"/>
</dbReference>
<dbReference type="PDBsum" id="7PZY"/>
<dbReference type="PDBsum" id="7Q08"/>
<dbReference type="PDBsum" id="7Q0F"/>
<dbReference type="PDBsum" id="7Q0P"/>
<dbReference type="PDBsum" id="7Q0R"/>
<dbReference type="PDBsum" id="8C3A"/>
<dbReference type="PDBsum" id="8CQ7"/>
<dbReference type="PDBsum" id="8CQW"/>
<dbReference type="PDBsum" id="8CRE"/>
<dbReference type="PDBsum" id="8OEQ"/>
<dbReference type="PDBsum" id="8OGJ"/>
<dbReference type="PDBsum" id="8OH6"/>
<dbReference type="PDBsum" id="8OI5"/>
<dbReference type="PDBsum" id="8OJ3"/>
<dbReference type="PDBsum" id="8Q5I"/>
<dbReference type="EMDB" id="EMD-16874"/>
<dbReference type="SMR" id="A0A1D8PM41"/>
<dbReference type="FunCoup" id="A0A1D8PM41">
    <property type="interactions" value="761"/>
</dbReference>
<dbReference type="STRING" id="237561.A0A1D8PM41"/>
<dbReference type="EnsemblFungi" id="C4_04390W_A-T">
    <property type="protein sequence ID" value="C4_04390W_A-T-p1"/>
    <property type="gene ID" value="C4_04390W_A"/>
</dbReference>
<dbReference type="GeneID" id="30515267"/>
<dbReference type="KEGG" id="cal:CAALFM_C404390WA"/>
<dbReference type="CGD" id="CAL0000196794">
    <property type="gene designation" value="orf19.1409.1"/>
</dbReference>
<dbReference type="VEuPathDB" id="FungiDB:C4_04390W_A"/>
<dbReference type="InParanoid" id="A0A1D8PM41"/>
<dbReference type="OMA" id="WIRFIST"/>
<dbReference type="OrthoDB" id="10259820at2759"/>
<dbReference type="Proteomes" id="UP000000559">
    <property type="component" value="Chromosome 4"/>
</dbReference>
<dbReference type="GO" id="GO:0005737">
    <property type="term" value="C:cytoplasm"/>
    <property type="evidence" value="ECO:0007669"/>
    <property type="project" value="UniProtKB-SubCell"/>
</dbReference>
<dbReference type="GO" id="GO:0030684">
    <property type="term" value="C:preribosome"/>
    <property type="evidence" value="ECO:0007669"/>
    <property type="project" value="EnsemblFungi"/>
</dbReference>
<dbReference type="GO" id="GO:0005840">
    <property type="term" value="C:ribosome"/>
    <property type="evidence" value="ECO:0007669"/>
    <property type="project" value="UniProtKB-KW"/>
</dbReference>
<dbReference type="GO" id="GO:0003723">
    <property type="term" value="F:RNA binding"/>
    <property type="evidence" value="ECO:0000318"/>
    <property type="project" value="GO_Central"/>
</dbReference>
<dbReference type="GO" id="GO:0003735">
    <property type="term" value="F:structural constituent of ribosome"/>
    <property type="evidence" value="ECO:0000318"/>
    <property type="project" value="GO_Central"/>
</dbReference>
<dbReference type="GO" id="GO:0002181">
    <property type="term" value="P:cytoplasmic translation"/>
    <property type="evidence" value="ECO:0000318"/>
    <property type="project" value="GO_Central"/>
</dbReference>
<dbReference type="FunFam" id="3.30.1360.210:FF:000003">
    <property type="entry name" value="60S ribosomal protein L22-B"/>
    <property type="match status" value="1"/>
</dbReference>
<dbReference type="Gene3D" id="3.30.1360.210">
    <property type="match status" value="1"/>
</dbReference>
<dbReference type="InterPro" id="IPR002671">
    <property type="entry name" value="Ribosomal_eL22"/>
</dbReference>
<dbReference type="InterPro" id="IPR038526">
    <property type="entry name" value="Ribosomal_eL22_sf"/>
</dbReference>
<dbReference type="PANTHER" id="PTHR10064">
    <property type="entry name" value="60S RIBOSOMAL PROTEIN L22"/>
    <property type="match status" value="1"/>
</dbReference>
<dbReference type="PANTHER" id="PTHR10064:SF31">
    <property type="entry name" value="LARGE RIBOSOMAL SUBUNIT PROTEIN EL22A-RELATED"/>
    <property type="match status" value="1"/>
</dbReference>
<dbReference type="Pfam" id="PF01776">
    <property type="entry name" value="Ribosomal_L22e"/>
    <property type="match status" value="1"/>
</dbReference>
<name>RL22B_CANAL</name>
<accession>A0A1D8PM41</accession>
<sequence length="124" mass="14089">MAPVTSKKSKSVKKFVVDVAAPVENDVFDQESYVKYLVEHVKVDGIVGNLGNDISITAESDNKVVVVVSGNGSFSGKYLKYLTKKYLKKNQIRDWIRFVSVKQNQYKLQFYAVAEDDEEEEDEE</sequence>